<keyword id="KW-0002">3D-structure</keyword>
<keyword id="KW-0028">Amino-acid biosynthesis</keyword>
<keyword id="KW-0368">Histidine biosynthesis</keyword>
<keyword id="KW-0378">Hydrolase</keyword>
<keyword id="KW-0486">Methionine biosynthesis</keyword>
<keyword id="KW-0511">Multifunctional enzyme</keyword>
<keyword id="KW-0521">NADP</keyword>
<keyword id="KW-0554">One-carbon metabolism</keyword>
<keyword id="KW-0560">Oxidoreductase</keyword>
<keyword id="KW-0658">Purine biosynthesis</keyword>
<keyword id="KW-1185">Reference proteome</keyword>
<evidence type="ECO:0000255" key="1">
    <source>
        <dbReference type="HAMAP-Rule" id="MF_01576"/>
    </source>
</evidence>
<evidence type="ECO:0007829" key="2">
    <source>
        <dbReference type="PDB" id="6V6Y"/>
    </source>
</evidence>
<dbReference type="EC" id="1.5.1.5" evidence="1"/>
<dbReference type="EC" id="3.5.4.9" evidence="1"/>
<dbReference type="EMBL" id="AP008226">
    <property type="protein sequence ID" value="BAD70943.1"/>
    <property type="molecule type" value="Genomic_DNA"/>
</dbReference>
<dbReference type="RefSeq" id="WP_011228455.1">
    <property type="nucleotide sequence ID" value="NC_006461.1"/>
</dbReference>
<dbReference type="RefSeq" id="YP_144386.1">
    <property type="nucleotide sequence ID" value="NC_006461.1"/>
</dbReference>
<dbReference type="PDB" id="6V6Y">
    <property type="method" value="X-ray"/>
    <property type="resolution" value="2.15 A"/>
    <property type="chains" value="A=1-277"/>
</dbReference>
<dbReference type="PDBsum" id="6V6Y"/>
<dbReference type="SMR" id="Q5SJ94"/>
<dbReference type="EnsemblBacteria" id="BAD70943">
    <property type="protein sequence ID" value="BAD70943"/>
    <property type="gene ID" value="BAD70943"/>
</dbReference>
<dbReference type="GeneID" id="3169194"/>
<dbReference type="KEGG" id="ttj:TTHA1120"/>
<dbReference type="PATRIC" id="fig|300852.9.peg.1099"/>
<dbReference type="eggNOG" id="COG0190">
    <property type="taxonomic scope" value="Bacteria"/>
</dbReference>
<dbReference type="HOGENOM" id="CLU_034045_2_1_0"/>
<dbReference type="PhylomeDB" id="Q5SJ94"/>
<dbReference type="UniPathway" id="UPA00193"/>
<dbReference type="Proteomes" id="UP000000532">
    <property type="component" value="Chromosome"/>
</dbReference>
<dbReference type="GO" id="GO:0005829">
    <property type="term" value="C:cytosol"/>
    <property type="evidence" value="ECO:0007669"/>
    <property type="project" value="TreeGrafter"/>
</dbReference>
<dbReference type="GO" id="GO:0004477">
    <property type="term" value="F:methenyltetrahydrofolate cyclohydrolase activity"/>
    <property type="evidence" value="ECO:0007669"/>
    <property type="project" value="UniProtKB-UniRule"/>
</dbReference>
<dbReference type="GO" id="GO:0004488">
    <property type="term" value="F:methylenetetrahydrofolate dehydrogenase (NADP+) activity"/>
    <property type="evidence" value="ECO:0007669"/>
    <property type="project" value="UniProtKB-UniRule"/>
</dbReference>
<dbReference type="GO" id="GO:0000105">
    <property type="term" value="P:L-histidine biosynthetic process"/>
    <property type="evidence" value="ECO:0007669"/>
    <property type="project" value="UniProtKB-KW"/>
</dbReference>
<dbReference type="GO" id="GO:0009086">
    <property type="term" value="P:methionine biosynthetic process"/>
    <property type="evidence" value="ECO:0007669"/>
    <property type="project" value="UniProtKB-KW"/>
</dbReference>
<dbReference type="GO" id="GO:0006164">
    <property type="term" value="P:purine nucleotide biosynthetic process"/>
    <property type="evidence" value="ECO:0007669"/>
    <property type="project" value="UniProtKB-KW"/>
</dbReference>
<dbReference type="GO" id="GO:0035999">
    <property type="term" value="P:tetrahydrofolate interconversion"/>
    <property type="evidence" value="ECO:0007669"/>
    <property type="project" value="UniProtKB-UniRule"/>
</dbReference>
<dbReference type="CDD" id="cd01080">
    <property type="entry name" value="NAD_bind_m-THF_DH_Cyclohyd"/>
    <property type="match status" value="1"/>
</dbReference>
<dbReference type="FunFam" id="3.40.50.720:FF:000094">
    <property type="entry name" value="Bifunctional protein FolD"/>
    <property type="match status" value="1"/>
</dbReference>
<dbReference type="FunFam" id="3.40.50.10860:FF:000005">
    <property type="entry name" value="C-1-tetrahydrofolate synthase, cytoplasmic, putative"/>
    <property type="match status" value="1"/>
</dbReference>
<dbReference type="Gene3D" id="3.40.50.10860">
    <property type="entry name" value="Leucine Dehydrogenase, chain A, domain 1"/>
    <property type="match status" value="1"/>
</dbReference>
<dbReference type="Gene3D" id="3.40.50.720">
    <property type="entry name" value="NAD(P)-binding Rossmann-like Domain"/>
    <property type="match status" value="1"/>
</dbReference>
<dbReference type="HAMAP" id="MF_01576">
    <property type="entry name" value="THF_DHG_CYH"/>
    <property type="match status" value="1"/>
</dbReference>
<dbReference type="InterPro" id="IPR046346">
    <property type="entry name" value="Aminoacid_DH-like_N_sf"/>
</dbReference>
<dbReference type="InterPro" id="IPR036291">
    <property type="entry name" value="NAD(P)-bd_dom_sf"/>
</dbReference>
<dbReference type="InterPro" id="IPR000672">
    <property type="entry name" value="THF_DH/CycHdrlase"/>
</dbReference>
<dbReference type="InterPro" id="IPR020630">
    <property type="entry name" value="THF_DH/CycHdrlase_cat_dom"/>
</dbReference>
<dbReference type="InterPro" id="IPR020867">
    <property type="entry name" value="THF_DH/CycHdrlase_CS"/>
</dbReference>
<dbReference type="InterPro" id="IPR020631">
    <property type="entry name" value="THF_DH/CycHdrlase_NAD-bd_dom"/>
</dbReference>
<dbReference type="NCBIfam" id="NF010770">
    <property type="entry name" value="PRK14173.1"/>
    <property type="match status" value="1"/>
</dbReference>
<dbReference type="PANTHER" id="PTHR48099:SF5">
    <property type="entry name" value="C-1-TETRAHYDROFOLATE SYNTHASE, CYTOPLASMIC"/>
    <property type="match status" value="1"/>
</dbReference>
<dbReference type="PANTHER" id="PTHR48099">
    <property type="entry name" value="C-1-TETRAHYDROFOLATE SYNTHASE, CYTOPLASMIC-RELATED"/>
    <property type="match status" value="1"/>
</dbReference>
<dbReference type="Pfam" id="PF00763">
    <property type="entry name" value="THF_DHG_CYH"/>
    <property type="match status" value="1"/>
</dbReference>
<dbReference type="Pfam" id="PF02882">
    <property type="entry name" value="THF_DHG_CYH_C"/>
    <property type="match status" value="1"/>
</dbReference>
<dbReference type="PRINTS" id="PR00085">
    <property type="entry name" value="THFDHDRGNASE"/>
</dbReference>
<dbReference type="SUPFAM" id="SSF53223">
    <property type="entry name" value="Aminoacid dehydrogenase-like, N-terminal domain"/>
    <property type="match status" value="1"/>
</dbReference>
<dbReference type="SUPFAM" id="SSF51735">
    <property type="entry name" value="NAD(P)-binding Rossmann-fold domains"/>
    <property type="match status" value="1"/>
</dbReference>
<dbReference type="PROSITE" id="PS00767">
    <property type="entry name" value="THF_DHG_CYH_2"/>
    <property type="match status" value="1"/>
</dbReference>
<organism>
    <name type="scientific">Thermus thermophilus (strain ATCC 27634 / DSM 579 / HB8)</name>
    <dbReference type="NCBI Taxonomy" id="300852"/>
    <lineage>
        <taxon>Bacteria</taxon>
        <taxon>Thermotogati</taxon>
        <taxon>Deinococcota</taxon>
        <taxon>Deinococci</taxon>
        <taxon>Thermales</taxon>
        <taxon>Thermaceae</taxon>
        <taxon>Thermus</taxon>
    </lineage>
</organism>
<comment type="function">
    <text evidence="1">Catalyzes the oxidation of 5,10-methylenetetrahydrofolate to 5,10-methenyltetrahydrofolate and then the hydrolysis of 5,10-methenyltetrahydrofolate to 10-formyltetrahydrofolate.</text>
</comment>
<comment type="catalytic activity">
    <reaction evidence="1">
        <text>(6R)-5,10-methylene-5,6,7,8-tetrahydrofolate + NADP(+) = (6R)-5,10-methenyltetrahydrofolate + NADPH</text>
        <dbReference type="Rhea" id="RHEA:22812"/>
        <dbReference type="ChEBI" id="CHEBI:15636"/>
        <dbReference type="ChEBI" id="CHEBI:57455"/>
        <dbReference type="ChEBI" id="CHEBI:57783"/>
        <dbReference type="ChEBI" id="CHEBI:58349"/>
        <dbReference type="EC" id="1.5.1.5"/>
    </reaction>
</comment>
<comment type="catalytic activity">
    <reaction evidence="1">
        <text>(6R)-5,10-methenyltetrahydrofolate + H2O = (6R)-10-formyltetrahydrofolate + H(+)</text>
        <dbReference type="Rhea" id="RHEA:23700"/>
        <dbReference type="ChEBI" id="CHEBI:15377"/>
        <dbReference type="ChEBI" id="CHEBI:15378"/>
        <dbReference type="ChEBI" id="CHEBI:57455"/>
        <dbReference type="ChEBI" id="CHEBI:195366"/>
        <dbReference type="EC" id="3.5.4.9"/>
    </reaction>
</comment>
<comment type="pathway">
    <text evidence="1">One-carbon metabolism; tetrahydrofolate interconversion.</text>
</comment>
<comment type="subunit">
    <text evidence="1">Homodimer.</text>
</comment>
<comment type="similarity">
    <text evidence="1">Belongs to the tetrahydrofolate dehydrogenase/cyclohydrolase family.</text>
</comment>
<feature type="chain" id="PRO_0000268546" description="Bifunctional protein FolD">
    <location>
        <begin position="1"/>
        <end position="282"/>
    </location>
</feature>
<feature type="binding site" evidence="1">
    <location>
        <begin position="162"/>
        <end position="164"/>
    </location>
    <ligand>
        <name>NADP(+)</name>
        <dbReference type="ChEBI" id="CHEBI:58349"/>
    </ligand>
</feature>
<feature type="binding site" evidence="1">
    <location>
        <position position="187"/>
    </location>
    <ligand>
        <name>NADP(+)</name>
        <dbReference type="ChEBI" id="CHEBI:58349"/>
    </ligand>
</feature>
<feature type="binding site" evidence="1">
    <location>
        <position position="228"/>
    </location>
    <ligand>
        <name>NADP(+)</name>
        <dbReference type="ChEBI" id="CHEBI:58349"/>
    </ligand>
</feature>
<feature type="helix" evidence="2">
    <location>
        <begin position="8"/>
        <end position="24"/>
    </location>
</feature>
<feature type="strand" evidence="2">
    <location>
        <begin position="31"/>
        <end position="38"/>
    </location>
</feature>
<feature type="helix" evidence="2">
    <location>
        <begin position="41"/>
        <end position="57"/>
    </location>
</feature>
<feature type="strand" evidence="2">
    <location>
        <begin position="60"/>
        <end position="66"/>
    </location>
</feature>
<feature type="helix" evidence="2">
    <location>
        <begin position="72"/>
        <end position="84"/>
    </location>
</feature>
<feature type="strand" evidence="2">
    <location>
        <begin position="90"/>
        <end position="93"/>
    </location>
</feature>
<feature type="helix" evidence="2">
    <location>
        <begin position="103"/>
        <end position="109"/>
    </location>
</feature>
<feature type="helix" evidence="2">
    <location>
        <begin position="112"/>
        <end position="114"/>
    </location>
</feature>
<feature type="helix" evidence="2">
    <location>
        <begin position="121"/>
        <end position="129"/>
    </location>
</feature>
<feature type="helix" evidence="2">
    <location>
        <begin position="137"/>
        <end position="148"/>
    </location>
</feature>
<feature type="strand" evidence="2">
    <location>
        <begin position="157"/>
        <end position="161"/>
    </location>
</feature>
<feature type="turn" evidence="2">
    <location>
        <begin position="165"/>
        <end position="167"/>
    </location>
</feature>
<feature type="helix" evidence="2">
    <location>
        <begin position="168"/>
        <end position="177"/>
    </location>
</feature>
<feature type="strand" evidence="2">
    <location>
        <begin position="181"/>
        <end position="185"/>
    </location>
</feature>
<feature type="helix" evidence="2">
    <location>
        <begin position="192"/>
        <end position="196"/>
    </location>
</feature>
<feature type="strand" evidence="2">
    <location>
        <begin position="200"/>
        <end position="204"/>
    </location>
</feature>
<feature type="helix" evidence="2">
    <location>
        <begin position="214"/>
        <end position="216"/>
    </location>
</feature>
<feature type="strand" evidence="2">
    <location>
        <begin position="222"/>
        <end position="225"/>
    </location>
</feature>
<feature type="strand" evidence="2">
    <location>
        <begin position="229"/>
        <end position="231"/>
    </location>
</feature>
<feature type="strand" evidence="2">
    <location>
        <begin position="234"/>
        <end position="236"/>
    </location>
</feature>
<feature type="helix" evidence="2">
    <location>
        <begin position="241"/>
        <end position="245"/>
    </location>
</feature>
<feature type="strand" evidence="2">
    <location>
        <begin position="248"/>
        <end position="250"/>
    </location>
</feature>
<feature type="strand" evidence="2">
    <location>
        <begin position="253"/>
        <end position="256"/>
    </location>
</feature>
<feature type="helix" evidence="2">
    <location>
        <begin position="257"/>
        <end position="276"/>
    </location>
</feature>
<sequence>MAAQVLSGHEAAEAVYEEIRARLRSLSFTPSLRVIRLGEDPASVAYVRLKDKRARALGYRSQVEVYPEDLPEEALLERIAALNADEEVDGILVQLPLPPHIRTQRVLEAIHPLKDVDGFHPLNVGRLWSGGKGLFPCTPLGVVRLLKHYGVDLRGKEVVVVGRSNIVGKPLAGLLLREDATVTLAHSKTQDLPEVTRRAQVLVVAVGRPHLVRKEWVREGAIVVDVGVNRVEGRLLGDVHPEVAEVAFALTPVPGGVGPMTVAMLMGNTLEAALLRRHGASG</sequence>
<proteinExistence type="evidence at protein level"/>
<gene>
    <name evidence="1" type="primary">folD</name>
    <name type="ordered locus">TTHA1120</name>
</gene>
<accession>Q5SJ94</accession>
<reference key="1">
    <citation type="submission" date="2004-11" db="EMBL/GenBank/DDBJ databases">
        <title>Complete genome sequence of Thermus thermophilus HB8.</title>
        <authorList>
            <person name="Masui R."/>
            <person name="Kurokawa K."/>
            <person name="Nakagawa N."/>
            <person name="Tokunaga F."/>
            <person name="Koyama Y."/>
            <person name="Shibata T."/>
            <person name="Oshima T."/>
            <person name="Yokoyama S."/>
            <person name="Yasunaga T."/>
            <person name="Kuramitsu S."/>
        </authorList>
    </citation>
    <scope>NUCLEOTIDE SEQUENCE [LARGE SCALE GENOMIC DNA]</scope>
    <source>
        <strain>ATCC 27634 / DSM 579 / HB8</strain>
    </source>
</reference>
<protein>
    <recommendedName>
        <fullName evidence="1">Bifunctional protein FolD</fullName>
    </recommendedName>
    <domain>
        <recommendedName>
            <fullName evidence="1">Methylenetetrahydrofolate dehydrogenase</fullName>
            <ecNumber evidence="1">1.5.1.5</ecNumber>
        </recommendedName>
    </domain>
    <domain>
        <recommendedName>
            <fullName evidence="1">Methenyltetrahydrofolate cyclohydrolase</fullName>
            <ecNumber evidence="1">3.5.4.9</ecNumber>
        </recommendedName>
    </domain>
</protein>
<name>FOLD_THET8</name>